<name>DNAJ_HELHP</name>
<organism>
    <name type="scientific">Helicobacter hepaticus (strain ATCC 51449 / 3B1)</name>
    <dbReference type="NCBI Taxonomy" id="235279"/>
    <lineage>
        <taxon>Bacteria</taxon>
        <taxon>Pseudomonadati</taxon>
        <taxon>Campylobacterota</taxon>
        <taxon>Epsilonproteobacteria</taxon>
        <taxon>Campylobacterales</taxon>
        <taxon>Helicobacteraceae</taxon>
        <taxon>Helicobacter</taxon>
    </lineage>
</organism>
<protein>
    <recommendedName>
        <fullName evidence="1">Chaperone protein DnaJ</fullName>
    </recommendedName>
</protein>
<reference key="1">
    <citation type="journal article" date="2003" name="Proc. Natl. Acad. Sci. U.S.A.">
        <title>The complete genome sequence of the carcinogenic bacterium Helicobacter hepaticus.</title>
        <authorList>
            <person name="Suerbaum S."/>
            <person name="Josenhans C."/>
            <person name="Sterzenbach T."/>
            <person name="Drescher B."/>
            <person name="Brandt P."/>
            <person name="Bell M."/>
            <person name="Droege M."/>
            <person name="Fartmann B."/>
            <person name="Fischer H.-P."/>
            <person name="Ge Z."/>
            <person name="Hoerster A."/>
            <person name="Holland R."/>
            <person name="Klein K."/>
            <person name="Koenig J."/>
            <person name="Macko L."/>
            <person name="Mendz G.L."/>
            <person name="Nyakatura G."/>
            <person name="Schauer D.B."/>
            <person name="Shen Z."/>
            <person name="Weber J."/>
            <person name="Frosch M."/>
            <person name="Fox J.G."/>
        </authorList>
    </citation>
    <scope>NUCLEOTIDE SEQUENCE [LARGE SCALE GENOMIC DNA]</scope>
    <source>
        <strain>ATCC 51449 / 3B1</strain>
    </source>
</reference>
<keyword id="KW-0143">Chaperone</keyword>
<keyword id="KW-0963">Cytoplasm</keyword>
<keyword id="KW-0235">DNA replication</keyword>
<keyword id="KW-0479">Metal-binding</keyword>
<keyword id="KW-1185">Reference proteome</keyword>
<keyword id="KW-0677">Repeat</keyword>
<keyword id="KW-0346">Stress response</keyword>
<keyword id="KW-0862">Zinc</keyword>
<keyword id="KW-0863">Zinc-finger</keyword>
<feature type="chain" id="PRO_0000070795" description="Chaperone protein DnaJ">
    <location>
        <begin position="1"/>
        <end position="385"/>
    </location>
</feature>
<feature type="domain" description="J" evidence="1">
    <location>
        <begin position="5"/>
        <end position="70"/>
    </location>
</feature>
<feature type="repeat" description="CXXCXGXG motif">
    <location>
        <begin position="149"/>
        <end position="156"/>
    </location>
</feature>
<feature type="repeat" description="CXXCXGXG motif">
    <location>
        <begin position="165"/>
        <end position="172"/>
    </location>
</feature>
<feature type="repeat" description="CXXCXGXG motif">
    <location>
        <begin position="187"/>
        <end position="194"/>
    </location>
</feature>
<feature type="repeat" description="CXXCXGXG motif">
    <location>
        <begin position="201"/>
        <end position="208"/>
    </location>
</feature>
<feature type="zinc finger region" description="CR-type" evidence="1">
    <location>
        <begin position="136"/>
        <end position="213"/>
    </location>
</feature>
<feature type="binding site" evidence="1">
    <location>
        <position position="149"/>
    </location>
    <ligand>
        <name>Zn(2+)</name>
        <dbReference type="ChEBI" id="CHEBI:29105"/>
        <label>1</label>
    </ligand>
</feature>
<feature type="binding site" evidence="1">
    <location>
        <position position="152"/>
    </location>
    <ligand>
        <name>Zn(2+)</name>
        <dbReference type="ChEBI" id="CHEBI:29105"/>
        <label>1</label>
    </ligand>
</feature>
<feature type="binding site" evidence="1">
    <location>
        <position position="165"/>
    </location>
    <ligand>
        <name>Zn(2+)</name>
        <dbReference type="ChEBI" id="CHEBI:29105"/>
        <label>2</label>
    </ligand>
</feature>
<feature type="binding site" evidence="1">
    <location>
        <position position="168"/>
    </location>
    <ligand>
        <name>Zn(2+)</name>
        <dbReference type="ChEBI" id="CHEBI:29105"/>
        <label>2</label>
    </ligand>
</feature>
<feature type="binding site" evidence="1">
    <location>
        <position position="187"/>
    </location>
    <ligand>
        <name>Zn(2+)</name>
        <dbReference type="ChEBI" id="CHEBI:29105"/>
        <label>2</label>
    </ligand>
</feature>
<feature type="binding site" evidence="1">
    <location>
        <position position="190"/>
    </location>
    <ligand>
        <name>Zn(2+)</name>
        <dbReference type="ChEBI" id="CHEBI:29105"/>
        <label>2</label>
    </ligand>
</feature>
<feature type="binding site" evidence="1">
    <location>
        <position position="201"/>
    </location>
    <ligand>
        <name>Zn(2+)</name>
        <dbReference type="ChEBI" id="CHEBI:29105"/>
        <label>1</label>
    </ligand>
</feature>
<feature type="binding site" evidence="1">
    <location>
        <position position="204"/>
    </location>
    <ligand>
        <name>Zn(2+)</name>
        <dbReference type="ChEBI" id="CHEBI:29105"/>
        <label>1</label>
    </ligand>
</feature>
<gene>
    <name evidence="1" type="primary">dnaJ</name>
    <name type="ordered locus">HH_1519</name>
</gene>
<dbReference type="EMBL" id="AE017125">
    <property type="protein sequence ID" value="AAP78116.1"/>
    <property type="molecule type" value="Genomic_DNA"/>
</dbReference>
<dbReference type="RefSeq" id="WP_011116359.1">
    <property type="nucleotide sequence ID" value="NC_004917.1"/>
</dbReference>
<dbReference type="SMR" id="Q7VG06"/>
<dbReference type="STRING" id="235279.HH_1519"/>
<dbReference type="KEGG" id="hhe:HH_1519"/>
<dbReference type="eggNOG" id="COG0484">
    <property type="taxonomic scope" value="Bacteria"/>
</dbReference>
<dbReference type="HOGENOM" id="CLU_017633_0_7_7"/>
<dbReference type="OrthoDB" id="9779889at2"/>
<dbReference type="Proteomes" id="UP000002495">
    <property type="component" value="Chromosome"/>
</dbReference>
<dbReference type="GO" id="GO:0005737">
    <property type="term" value="C:cytoplasm"/>
    <property type="evidence" value="ECO:0007669"/>
    <property type="project" value="UniProtKB-SubCell"/>
</dbReference>
<dbReference type="GO" id="GO:0005524">
    <property type="term" value="F:ATP binding"/>
    <property type="evidence" value="ECO:0007669"/>
    <property type="project" value="InterPro"/>
</dbReference>
<dbReference type="GO" id="GO:0031072">
    <property type="term" value="F:heat shock protein binding"/>
    <property type="evidence" value="ECO:0007669"/>
    <property type="project" value="InterPro"/>
</dbReference>
<dbReference type="GO" id="GO:0051082">
    <property type="term" value="F:unfolded protein binding"/>
    <property type="evidence" value="ECO:0007669"/>
    <property type="project" value="UniProtKB-UniRule"/>
</dbReference>
<dbReference type="GO" id="GO:0008270">
    <property type="term" value="F:zinc ion binding"/>
    <property type="evidence" value="ECO:0007669"/>
    <property type="project" value="UniProtKB-UniRule"/>
</dbReference>
<dbReference type="GO" id="GO:0051085">
    <property type="term" value="P:chaperone cofactor-dependent protein refolding"/>
    <property type="evidence" value="ECO:0007669"/>
    <property type="project" value="TreeGrafter"/>
</dbReference>
<dbReference type="GO" id="GO:0006260">
    <property type="term" value="P:DNA replication"/>
    <property type="evidence" value="ECO:0007669"/>
    <property type="project" value="UniProtKB-KW"/>
</dbReference>
<dbReference type="GO" id="GO:0042026">
    <property type="term" value="P:protein refolding"/>
    <property type="evidence" value="ECO:0007669"/>
    <property type="project" value="TreeGrafter"/>
</dbReference>
<dbReference type="GO" id="GO:0009408">
    <property type="term" value="P:response to heat"/>
    <property type="evidence" value="ECO:0007669"/>
    <property type="project" value="InterPro"/>
</dbReference>
<dbReference type="CDD" id="cd06257">
    <property type="entry name" value="DnaJ"/>
    <property type="match status" value="1"/>
</dbReference>
<dbReference type="CDD" id="cd10747">
    <property type="entry name" value="DnaJ_C"/>
    <property type="match status" value="1"/>
</dbReference>
<dbReference type="CDD" id="cd10719">
    <property type="entry name" value="DnaJ_zf"/>
    <property type="match status" value="1"/>
</dbReference>
<dbReference type="FunFam" id="1.10.287.110:FF:000034">
    <property type="entry name" value="Chaperone protein DnaJ"/>
    <property type="match status" value="1"/>
</dbReference>
<dbReference type="FunFam" id="2.10.230.10:FF:000002">
    <property type="entry name" value="Molecular chaperone DnaJ"/>
    <property type="match status" value="1"/>
</dbReference>
<dbReference type="Gene3D" id="1.10.287.110">
    <property type="entry name" value="DnaJ domain"/>
    <property type="match status" value="1"/>
</dbReference>
<dbReference type="Gene3D" id="2.10.230.10">
    <property type="entry name" value="Heat shock protein DnaJ, cysteine-rich domain"/>
    <property type="match status" value="1"/>
</dbReference>
<dbReference type="Gene3D" id="2.60.260.20">
    <property type="entry name" value="Urease metallochaperone UreE, N-terminal domain"/>
    <property type="match status" value="2"/>
</dbReference>
<dbReference type="HAMAP" id="MF_01152">
    <property type="entry name" value="DnaJ"/>
    <property type="match status" value="1"/>
</dbReference>
<dbReference type="InterPro" id="IPR012724">
    <property type="entry name" value="DnaJ"/>
</dbReference>
<dbReference type="InterPro" id="IPR002939">
    <property type="entry name" value="DnaJ_C"/>
</dbReference>
<dbReference type="InterPro" id="IPR001623">
    <property type="entry name" value="DnaJ_domain"/>
</dbReference>
<dbReference type="InterPro" id="IPR018253">
    <property type="entry name" value="DnaJ_domain_CS"/>
</dbReference>
<dbReference type="InterPro" id="IPR008971">
    <property type="entry name" value="HSP40/DnaJ_pept-bd"/>
</dbReference>
<dbReference type="InterPro" id="IPR001305">
    <property type="entry name" value="HSP_DnaJ_Cys-rich_dom"/>
</dbReference>
<dbReference type="InterPro" id="IPR036410">
    <property type="entry name" value="HSP_DnaJ_Cys-rich_dom_sf"/>
</dbReference>
<dbReference type="InterPro" id="IPR036869">
    <property type="entry name" value="J_dom_sf"/>
</dbReference>
<dbReference type="NCBIfam" id="TIGR02349">
    <property type="entry name" value="DnaJ_bact"/>
    <property type="match status" value="1"/>
</dbReference>
<dbReference type="NCBIfam" id="NF008035">
    <property type="entry name" value="PRK10767.1"/>
    <property type="match status" value="1"/>
</dbReference>
<dbReference type="PANTHER" id="PTHR43096:SF48">
    <property type="entry name" value="CHAPERONE PROTEIN DNAJ"/>
    <property type="match status" value="1"/>
</dbReference>
<dbReference type="PANTHER" id="PTHR43096">
    <property type="entry name" value="DNAJ HOMOLOG 1, MITOCHONDRIAL-RELATED"/>
    <property type="match status" value="1"/>
</dbReference>
<dbReference type="Pfam" id="PF00226">
    <property type="entry name" value="DnaJ"/>
    <property type="match status" value="1"/>
</dbReference>
<dbReference type="Pfam" id="PF01556">
    <property type="entry name" value="DnaJ_C"/>
    <property type="match status" value="1"/>
</dbReference>
<dbReference type="Pfam" id="PF00684">
    <property type="entry name" value="DnaJ_CXXCXGXG"/>
    <property type="match status" value="1"/>
</dbReference>
<dbReference type="PRINTS" id="PR00625">
    <property type="entry name" value="JDOMAIN"/>
</dbReference>
<dbReference type="SMART" id="SM00271">
    <property type="entry name" value="DnaJ"/>
    <property type="match status" value="1"/>
</dbReference>
<dbReference type="SUPFAM" id="SSF46565">
    <property type="entry name" value="Chaperone J-domain"/>
    <property type="match status" value="1"/>
</dbReference>
<dbReference type="SUPFAM" id="SSF57938">
    <property type="entry name" value="DnaJ/Hsp40 cysteine-rich domain"/>
    <property type="match status" value="1"/>
</dbReference>
<dbReference type="SUPFAM" id="SSF49493">
    <property type="entry name" value="HSP40/DnaJ peptide-binding domain"/>
    <property type="match status" value="2"/>
</dbReference>
<dbReference type="PROSITE" id="PS00636">
    <property type="entry name" value="DNAJ_1"/>
    <property type="match status" value="1"/>
</dbReference>
<dbReference type="PROSITE" id="PS50076">
    <property type="entry name" value="DNAJ_2"/>
    <property type="match status" value="1"/>
</dbReference>
<dbReference type="PROSITE" id="PS51188">
    <property type="entry name" value="ZF_CR"/>
    <property type="match status" value="1"/>
</dbReference>
<sequence>METFDYYEILEITRTSDKETIKKAYRKMALKYHPDRNPDDKDAEEQFKRVNEAYEVLSDDSKRQIYDKYGKEGLQNSGFSGFSGRDFSDIFGDLGSIFESAFGANFGFSTQKRGGGKYNLDEIVGLELSFTEAVFGCKKEIHNSFKIACSDCKGTGAKGGKLNTCKDCGGKGQVYMRQGFMTFAQTCPTCKGEGQSASEKCSKCKGSGFEISEESFEVSIPEGIDDGNRIRIGGRGNADKNGSRGDLYIAVSVAEDENFVRDGENVYIEVPVFFTSIVLGTTLKIPSLRGELELKIPPNTRDKEQFVFDNEGIKDVNSAYRGKFVAQIKITYPPKLNAEQRALTEKLQESFGIESEPYKNVFEECFTKVKQWLHKHSKNDKDTTK</sequence>
<accession>Q7VG06</accession>
<comment type="function">
    <text evidence="1">Participates actively in the response to hyperosmotic and heat shock by preventing the aggregation of stress-denatured proteins and by disaggregating proteins, also in an autonomous, DnaK-independent fashion. Unfolded proteins bind initially to DnaJ; upon interaction with the DnaJ-bound protein, DnaK hydrolyzes its bound ATP, resulting in the formation of a stable complex. GrpE releases ADP from DnaK; ATP binding to DnaK triggers the release of the substrate protein, thus completing the reaction cycle. Several rounds of ATP-dependent interactions between DnaJ, DnaK and GrpE are required for fully efficient folding. Also involved, together with DnaK and GrpE, in the DNA replication of plasmids through activation of initiation proteins.</text>
</comment>
<comment type="cofactor">
    <cofactor evidence="1">
        <name>Zn(2+)</name>
        <dbReference type="ChEBI" id="CHEBI:29105"/>
    </cofactor>
    <text evidence="1">Binds 2 Zn(2+) ions per monomer.</text>
</comment>
<comment type="subunit">
    <text evidence="1">Homodimer.</text>
</comment>
<comment type="subcellular location">
    <subcellularLocation>
        <location evidence="1">Cytoplasm</location>
    </subcellularLocation>
</comment>
<comment type="domain">
    <text evidence="1">The J domain is necessary and sufficient to stimulate DnaK ATPase activity. Zinc center 1 plays an important role in the autonomous, DnaK-independent chaperone activity of DnaJ. Zinc center 2 is essential for interaction with DnaK and for DnaJ activity.</text>
</comment>
<comment type="similarity">
    <text evidence="1">Belongs to the DnaJ family.</text>
</comment>
<proteinExistence type="inferred from homology"/>
<evidence type="ECO:0000255" key="1">
    <source>
        <dbReference type="HAMAP-Rule" id="MF_01152"/>
    </source>
</evidence>